<proteinExistence type="inferred from homology"/>
<name>NDK_METBF</name>
<accession>Q466D4</accession>
<feature type="chain" id="PRO_0000226588" description="Nucleoside diphosphate kinase">
    <location>
        <begin position="1"/>
        <end position="149"/>
    </location>
</feature>
<feature type="active site" description="Pros-phosphohistidine intermediate" evidence="1">
    <location>
        <position position="115"/>
    </location>
</feature>
<feature type="binding site" evidence="1">
    <location>
        <position position="9"/>
    </location>
    <ligand>
        <name>ATP</name>
        <dbReference type="ChEBI" id="CHEBI:30616"/>
    </ligand>
</feature>
<feature type="binding site" evidence="1">
    <location>
        <position position="57"/>
    </location>
    <ligand>
        <name>ATP</name>
        <dbReference type="ChEBI" id="CHEBI:30616"/>
    </ligand>
</feature>
<feature type="binding site" evidence="1">
    <location>
        <position position="85"/>
    </location>
    <ligand>
        <name>ATP</name>
        <dbReference type="ChEBI" id="CHEBI:30616"/>
    </ligand>
</feature>
<feature type="binding site" evidence="1">
    <location>
        <position position="91"/>
    </location>
    <ligand>
        <name>ATP</name>
        <dbReference type="ChEBI" id="CHEBI:30616"/>
    </ligand>
</feature>
<feature type="binding site" evidence="1">
    <location>
        <position position="102"/>
    </location>
    <ligand>
        <name>ATP</name>
        <dbReference type="ChEBI" id="CHEBI:30616"/>
    </ligand>
</feature>
<feature type="binding site" evidence="1">
    <location>
        <position position="112"/>
    </location>
    <ligand>
        <name>ATP</name>
        <dbReference type="ChEBI" id="CHEBI:30616"/>
    </ligand>
</feature>
<reference key="1">
    <citation type="journal article" date="2006" name="J. Bacteriol.">
        <title>The Methanosarcina barkeri genome: comparative analysis with Methanosarcina acetivorans and Methanosarcina mazei reveals extensive rearrangement within methanosarcinal genomes.</title>
        <authorList>
            <person name="Maeder D.L."/>
            <person name="Anderson I."/>
            <person name="Brettin T.S."/>
            <person name="Bruce D.C."/>
            <person name="Gilna P."/>
            <person name="Han C.S."/>
            <person name="Lapidus A."/>
            <person name="Metcalf W.W."/>
            <person name="Saunders E."/>
            <person name="Tapia R."/>
            <person name="Sowers K.R."/>
        </authorList>
    </citation>
    <scope>NUCLEOTIDE SEQUENCE [LARGE SCALE GENOMIC DNA]</scope>
    <source>
        <strain>Fusaro / DSM 804</strain>
    </source>
</reference>
<evidence type="ECO:0000255" key="1">
    <source>
        <dbReference type="HAMAP-Rule" id="MF_00451"/>
    </source>
</evidence>
<gene>
    <name evidence="1" type="primary">ndk</name>
    <name type="ordered locus">Mbar_A3385</name>
</gene>
<keyword id="KW-0067">ATP-binding</keyword>
<keyword id="KW-0963">Cytoplasm</keyword>
<keyword id="KW-0418">Kinase</keyword>
<keyword id="KW-0460">Magnesium</keyword>
<keyword id="KW-0479">Metal-binding</keyword>
<keyword id="KW-0546">Nucleotide metabolism</keyword>
<keyword id="KW-0547">Nucleotide-binding</keyword>
<keyword id="KW-0597">Phosphoprotein</keyword>
<keyword id="KW-0808">Transferase</keyword>
<sequence>MEQTYVMVKPDGVQRGLVGEIISRIEKRGLKIVALRMNVISEATAKEHYSEHAAKPFFPGLVGFITSGPSVSMVVEGKDAIRVMRAINGATNPVDAAPGTVRGDFALDVGRNVVHASDSPEAAAREIAIHFKDSEIGNYSRIDEVCLYE</sequence>
<protein>
    <recommendedName>
        <fullName evidence="1">Nucleoside diphosphate kinase</fullName>
        <shortName evidence="1">NDK</shortName>
        <shortName evidence="1">NDP kinase</shortName>
        <ecNumber evidence="1">2.7.4.6</ecNumber>
    </recommendedName>
    <alternativeName>
        <fullName evidence="1">Nucleoside-2-P kinase</fullName>
    </alternativeName>
</protein>
<dbReference type="EC" id="2.7.4.6" evidence="1"/>
<dbReference type="EMBL" id="CP000099">
    <property type="protein sequence ID" value="AAZ72258.1"/>
    <property type="molecule type" value="Genomic_DNA"/>
</dbReference>
<dbReference type="SMR" id="Q466D4"/>
<dbReference type="STRING" id="269797.Mbar_A3385"/>
<dbReference type="PaxDb" id="269797-Mbar_A3385"/>
<dbReference type="KEGG" id="mba:Mbar_A3385"/>
<dbReference type="eggNOG" id="arCOG04313">
    <property type="taxonomic scope" value="Archaea"/>
</dbReference>
<dbReference type="HOGENOM" id="CLU_060216_6_3_2"/>
<dbReference type="OrthoDB" id="6874at2157"/>
<dbReference type="GO" id="GO:0005737">
    <property type="term" value="C:cytoplasm"/>
    <property type="evidence" value="ECO:0007669"/>
    <property type="project" value="UniProtKB-SubCell"/>
</dbReference>
<dbReference type="GO" id="GO:0005524">
    <property type="term" value="F:ATP binding"/>
    <property type="evidence" value="ECO:0007669"/>
    <property type="project" value="UniProtKB-UniRule"/>
</dbReference>
<dbReference type="GO" id="GO:0046872">
    <property type="term" value="F:metal ion binding"/>
    <property type="evidence" value="ECO:0007669"/>
    <property type="project" value="UniProtKB-KW"/>
</dbReference>
<dbReference type="GO" id="GO:0004550">
    <property type="term" value="F:nucleoside diphosphate kinase activity"/>
    <property type="evidence" value="ECO:0007669"/>
    <property type="project" value="UniProtKB-UniRule"/>
</dbReference>
<dbReference type="GO" id="GO:0006241">
    <property type="term" value="P:CTP biosynthetic process"/>
    <property type="evidence" value="ECO:0007669"/>
    <property type="project" value="UniProtKB-UniRule"/>
</dbReference>
<dbReference type="GO" id="GO:0006183">
    <property type="term" value="P:GTP biosynthetic process"/>
    <property type="evidence" value="ECO:0007669"/>
    <property type="project" value="UniProtKB-UniRule"/>
</dbReference>
<dbReference type="GO" id="GO:0006228">
    <property type="term" value="P:UTP biosynthetic process"/>
    <property type="evidence" value="ECO:0007669"/>
    <property type="project" value="UniProtKB-UniRule"/>
</dbReference>
<dbReference type="CDD" id="cd04413">
    <property type="entry name" value="NDPk_I"/>
    <property type="match status" value="1"/>
</dbReference>
<dbReference type="FunFam" id="3.30.70.141:FF:000003">
    <property type="entry name" value="Nucleoside diphosphate kinase"/>
    <property type="match status" value="1"/>
</dbReference>
<dbReference type="Gene3D" id="3.30.70.141">
    <property type="entry name" value="Nucleoside diphosphate kinase-like domain"/>
    <property type="match status" value="1"/>
</dbReference>
<dbReference type="HAMAP" id="MF_00451">
    <property type="entry name" value="NDP_kinase"/>
    <property type="match status" value="1"/>
</dbReference>
<dbReference type="InterPro" id="IPR034907">
    <property type="entry name" value="NDK-like_dom"/>
</dbReference>
<dbReference type="InterPro" id="IPR036850">
    <property type="entry name" value="NDK-like_dom_sf"/>
</dbReference>
<dbReference type="InterPro" id="IPR001564">
    <property type="entry name" value="Nucleoside_diP_kinase"/>
</dbReference>
<dbReference type="InterPro" id="IPR023005">
    <property type="entry name" value="Nucleoside_diP_kinase_AS"/>
</dbReference>
<dbReference type="NCBIfam" id="NF001908">
    <property type="entry name" value="PRK00668.1"/>
    <property type="match status" value="1"/>
</dbReference>
<dbReference type="PANTHER" id="PTHR11349">
    <property type="entry name" value="NUCLEOSIDE DIPHOSPHATE KINASE"/>
    <property type="match status" value="1"/>
</dbReference>
<dbReference type="Pfam" id="PF00334">
    <property type="entry name" value="NDK"/>
    <property type="match status" value="1"/>
</dbReference>
<dbReference type="PRINTS" id="PR01243">
    <property type="entry name" value="NUCDPKINASE"/>
</dbReference>
<dbReference type="SMART" id="SM00562">
    <property type="entry name" value="NDK"/>
    <property type="match status" value="1"/>
</dbReference>
<dbReference type="SUPFAM" id="SSF54919">
    <property type="entry name" value="Nucleoside diphosphate kinase, NDK"/>
    <property type="match status" value="1"/>
</dbReference>
<dbReference type="PROSITE" id="PS00469">
    <property type="entry name" value="NDPK"/>
    <property type="match status" value="1"/>
</dbReference>
<dbReference type="PROSITE" id="PS51374">
    <property type="entry name" value="NDPK_LIKE"/>
    <property type="match status" value="1"/>
</dbReference>
<organism>
    <name type="scientific">Methanosarcina barkeri (strain Fusaro / DSM 804)</name>
    <dbReference type="NCBI Taxonomy" id="269797"/>
    <lineage>
        <taxon>Archaea</taxon>
        <taxon>Methanobacteriati</taxon>
        <taxon>Methanobacteriota</taxon>
        <taxon>Stenosarchaea group</taxon>
        <taxon>Methanomicrobia</taxon>
        <taxon>Methanosarcinales</taxon>
        <taxon>Methanosarcinaceae</taxon>
        <taxon>Methanosarcina</taxon>
    </lineage>
</organism>
<comment type="function">
    <text evidence="1">Major role in the synthesis of nucleoside triphosphates other than ATP. The ATP gamma phosphate is transferred to the NDP beta phosphate via a ping-pong mechanism, using a phosphorylated active-site intermediate.</text>
</comment>
<comment type="catalytic activity">
    <reaction evidence="1">
        <text>a 2'-deoxyribonucleoside 5'-diphosphate + ATP = a 2'-deoxyribonucleoside 5'-triphosphate + ADP</text>
        <dbReference type="Rhea" id="RHEA:44640"/>
        <dbReference type="ChEBI" id="CHEBI:30616"/>
        <dbReference type="ChEBI" id="CHEBI:61560"/>
        <dbReference type="ChEBI" id="CHEBI:73316"/>
        <dbReference type="ChEBI" id="CHEBI:456216"/>
        <dbReference type="EC" id="2.7.4.6"/>
    </reaction>
</comment>
<comment type="catalytic activity">
    <reaction evidence="1">
        <text>a ribonucleoside 5'-diphosphate + ATP = a ribonucleoside 5'-triphosphate + ADP</text>
        <dbReference type="Rhea" id="RHEA:18113"/>
        <dbReference type="ChEBI" id="CHEBI:30616"/>
        <dbReference type="ChEBI" id="CHEBI:57930"/>
        <dbReference type="ChEBI" id="CHEBI:61557"/>
        <dbReference type="ChEBI" id="CHEBI:456216"/>
        <dbReference type="EC" id="2.7.4.6"/>
    </reaction>
</comment>
<comment type="cofactor">
    <cofactor evidence="1">
        <name>Mg(2+)</name>
        <dbReference type="ChEBI" id="CHEBI:18420"/>
    </cofactor>
</comment>
<comment type="subcellular location">
    <subcellularLocation>
        <location evidence="1">Cytoplasm</location>
    </subcellularLocation>
</comment>
<comment type="similarity">
    <text evidence="1">Belongs to the NDK family.</text>
</comment>